<comment type="function">
    <text>Confers export-mediated resistance against antiseptic and disinfectant compounds such as intercalating dyes, quaternary ammonium salts and diamidines.</text>
</comment>
<comment type="subcellular location">
    <subcellularLocation>
        <location>Cell membrane</location>
        <topology>Multi-pass membrane protein</topology>
    </subcellularLocation>
</comment>
<comment type="similarity">
    <text evidence="1">Belongs to the major facilitator superfamily.</text>
</comment>
<dbReference type="EMBL" id="X56628">
    <property type="protein sequence ID" value="CAA39963.1"/>
    <property type="molecule type" value="Genomic_DNA"/>
</dbReference>
<dbReference type="PIR" id="S12394">
    <property type="entry name" value="S12394"/>
</dbReference>
<dbReference type="RefSeq" id="YP_003813123.1">
    <property type="nucleotide sequence ID" value="NC_014369.1"/>
</dbReference>
<dbReference type="RefSeq" id="YP_536864.1">
    <property type="nucleotide sequence ID" value="NC_007931.1"/>
</dbReference>
<dbReference type="PDB" id="7Y58">
    <property type="method" value="EM"/>
    <property type="resolution" value="3.80 A"/>
    <property type="chains" value="A=1-514"/>
</dbReference>
<dbReference type="PDBsum" id="7Y58"/>
<dbReference type="SMR" id="P0A0J9"/>
<dbReference type="TCDB" id="2.A.1.3.4">
    <property type="family name" value="the major facilitator superfamily (mfs)"/>
</dbReference>
<dbReference type="OMA" id="AMLICQV"/>
<dbReference type="GO" id="GO:0005886">
    <property type="term" value="C:plasma membrane"/>
    <property type="evidence" value="ECO:0007669"/>
    <property type="project" value="UniProtKB-SubCell"/>
</dbReference>
<dbReference type="GO" id="GO:0022857">
    <property type="term" value="F:transmembrane transporter activity"/>
    <property type="evidence" value="ECO:0007669"/>
    <property type="project" value="InterPro"/>
</dbReference>
<dbReference type="GO" id="GO:0046677">
    <property type="term" value="P:response to antibiotic"/>
    <property type="evidence" value="ECO:0007669"/>
    <property type="project" value="UniProtKB-KW"/>
</dbReference>
<dbReference type="CDD" id="cd17321">
    <property type="entry name" value="MFS_MMR_MDR_like"/>
    <property type="match status" value="1"/>
</dbReference>
<dbReference type="Gene3D" id="1.20.1250.20">
    <property type="entry name" value="MFS general substrate transporter like domains"/>
    <property type="match status" value="2"/>
</dbReference>
<dbReference type="InterPro" id="IPR011701">
    <property type="entry name" value="MFS"/>
</dbReference>
<dbReference type="InterPro" id="IPR020846">
    <property type="entry name" value="MFS_dom"/>
</dbReference>
<dbReference type="InterPro" id="IPR036259">
    <property type="entry name" value="MFS_trans_sf"/>
</dbReference>
<dbReference type="InterPro" id="IPR005829">
    <property type="entry name" value="Sugar_transporter_CS"/>
</dbReference>
<dbReference type="NCBIfam" id="NF000089">
    <property type="entry name" value="qac_MFS_AB"/>
    <property type="match status" value="1"/>
</dbReference>
<dbReference type="PANTHER" id="PTHR42718">
    <property type="entry name" value="MAJOR FACILITATOR SUPERFAMILY MULTIDRUG TRANSPORTER MFSC"/>
    <property type="match status" value="1"/>
</dbReference>
<dbReference type="PANTHER" id="PTHR42718:SF47">
    <property type="entry name" value="METHYL VIOLOGEN RESISTANCE PROTEIN SMVA"/>
    <property type="match status" value="1"/>
</dbReference>
<dbReference type="Pfam" id="PF07690">
    <property type="entry name" value="MFS_1"/>
    <property type="match status" value="1"/>
</dbReference>
<dbReference type="SUPFAM" id="SSF103473">
    <property type="entry name" value="MFS general substrate transporter"/>
    <property type="match status" value="1"/>
</dbReference>
<dbReference type="PROSITE" id="PS50850">
    <property type="entry name" value="MFS"/>
    <property type="match status" value="1"/>
</dbReference>
<dbReference type="PROSITE" id="PS00216">
    <property type="entry name" value="SUGAR_TRANSPORT_1"/>
    <property type="match status" value="1"/>
</dbReference>
<sequence>MISFFTKTTDMMTSKKRWTALVVLAVSLFVVTMDMTILIMALPELVRELEPSGTQQLWIVDIYSLVLAGFIIPLSAFADKWGRKKALLTGFALFGLVSLAIFFAESAEFVIAIRFLLGIAGALIMPTTLSMIRVIFENPKERATALAVWSIASSIGAVFGPIIGGALLEQFSWHSAFLINVPFAIIAVVAGLFLLPESKLSKEKSHSWDIPSTILSIAGMIGLVWSIKEFSKEGLADIIPWVVIVLAITMIVIFVKRNLSSSDPMLDVRLFKKRSFSAGTIAAFMTMFAMASVLLLASQWLQVVEELSPFKAGLYLLPMAIGDMVFAPIAPGLAARFGPKIVLPSGIGIAAIGMFIMYFFGHPLSYSTMALALILVGAGMASLAVASALIMLETPTSKAGNAAAVEESMYDLGNVFGVAVLGSLSSMLYRVFLDISSFSSKGIVGDLAHVAEESVVGAVEVAKATGIKQLANEAVTSFNDAFVATALVGGIIMIIISIVVYLLIPKSLDITKQK</sequence>
<proteinExistence type="evidence at protein level"/>
<gene>
    <name type="primary">qacA</name>
</gene>
<evidence type="ECO:0000305" key="1"/>
<evidence type="ECO:0000305" key="2">
    <source>
    </source>
</evidence>
<geneLocation type="plasmid">
    <name>VRSAp</name>
</geneLocation>
<geneLocation type="plasmid">
    <name>pSK1</name>
</geneLocation>
<reference key="1">
    <citation type="journal article" date="1990" name="Mol. Microbiol.">
        <title>Efflux-mediated antiseptic resistance gene qacA from Staphylococcus aureus: common ancestry with tetracycline- and sugar-transport proteins.</title>
        <authorList>
            <person name="Rouch D.A."/>
            <person name="Cram D.S."/>
            <person name="Diberardino D."/>
            <person name="Littlejohn T.G."/>
            <person name="Skurray R.A."/>
        </authorList>
    </citation>
    <scope>NUCLEOTIDE SEQUENCE [GENOMIC DNA]</scope>
    <source>
        <plasmid>pSK1</plasmid>
    </source>
</reference>
<reference key="2">
    <citation type="journal article" date="1996" name="Proc. Natl. Acad. Sci. U.S.A.">
        <title>Multidrug resistance proteins QacA and QacB from Staphylococcus aureus: membrane topology and identification of residues involved in substrate specificity.</title>
        <authorList>
            <person name="Paulsen I.T."/>
            <person name="Brown M.H."/>
            <person name="Littlejohn T.G."/>
            <person name="Mitchell B.A."/>
            <person name="Skurray R.A."/>
        </authorList>
    </citation>
    <scope>TOPOLOGY</scope>
</reference>
<protein>
    <recommendedName>
        <fullName>Antiseptic resistance protein</fullName>
    </recommendedName>
</protein>
<feature type="chain" id="PRO_0000173380" description="Antiseptic resistance protein">
    <location>
        <begin position="1"/>
        <end position="514"/>
    </location>
</feature>
<feature type="topological domain" description="Cytoplasmic" evidence="2">
    <location>
        <begin position="1"/>
        <end position="23"/>
    </location>
</feature>
<feature type="transmembrane region" description="Helical" evidence="1">
    <location>
        <begin position="24"/>
        <end position="41"/>
    </location>
</feature>
<feature type="topological domain" description="Extracellular" evidence="2">
    <location>
        <begin position="42"/>
        <end position="57"/>
    </location>
</feature>
<feature type="transmembrane region" description="Helical" evidence="1">
    <location>
        <begin position="58"/>
        <end position="75"/>
    </location>
</feature>
<feature type="topological domain" description="Cytoplasmic" evidence="2">
    <location>
        <begin position="76"/>
        <end position="86"/>
    </location>
</feature>
<feature type="transmembrane region" description="Helical" evidence="1">
    <location>
        <begin position="87"/>
        <end position="104"/>
    </location>
</feature>
<feature type="topological domain" description="Extracellular" evidence="2">
    <location>
        <begin position="105"/>
        <end position="112"/>
    </location>
</feature>
<feature type="transmembrane region" description="Helical" evidence="1">
    <location>
        <begin position="113"/>
        <end position="130"/>
    </location>
</feature>
<feature type="topological domain" description="Cytoplasmic" evidence="2">
    <location>
        <begin position="131"/>
        <end position="146"/>
    </location>
</feature>
<feature type="transmembrane region" description="Helical" evidence="1">
    <location>
        <begin position="147"/>
        <end position="164"/>
    </location>
</feature>
<feature type="topological domain" description="Extracellular" evidence="2">
    <location>
        <begin position="165"/>
        <end position="172"/>
    </location>
</feature>
<feature type="transmembrane region" description="Helical" evidence="1">
    <location>
        <begin position="173"/>
        <end position="190"/>
    </location>
</feature>
<feature type="topological domain" description="Cytoplasmic" evidence="2">
    <location>
        <begin position="191"/>
        <end position="207"/>
    </location>
</feature>
<feature type="transmembrane region" description="Helical" evidence="1">
    <location>
        <begin position="208"/>
        <end position="225"/>
    </location>
</feature>
<feature type="topological domain" description="Extracellular" evidence="2">
    <location>
        <begin position="226"/>
        <end position="237"/>
    </location>
</feature>
<feature type="transmembrane region" description="Helical" evidence="1">
    <location>
        <begin position="238"/>
        <end position="255"/>
    </location>
</feature>
<feature type="topological domain" description="Cytoplasmic" evidence="2">
    <location>
        <begin position="256"/>
        <end position="278"/>
    </location>
</feature>
<feature type="transmembrane region" description="Helical" evidence="1">
    <location>
        <begin position="279"/>
        <end position="295"/>
    </location>
</feature>
<feature type="topological domain" description="Extracellular" evidence="2">
    <location>
        <begin position="296"/>
        <end position="315"/>
    </location>
</feature>
<feature type="transmembrane region" description="Helical" evidence="1">
    <location>
        <begin position="316"/>
        <end position="333"/>
    </location>
</feature>
<feature type="topological domain" description="Cytoplasmic" evidence="2">
    <location>
        <begin position="334"/>
        <end position="341"/>
    </location>
</feature>
<feature type="transmembrane region" description="Helical" evidence="1">
    <location>
        <begin position="342"/>
        <end position="360"/>
    </location>
</feature>
<feature type="topological domain" description="Extracellular" evidence="2">
    <location>
        <begin position="361"/>
        <end position="369"/>
    </location>
</feature>
<feature type="transmembrane region" description="Helical" evidence="1">
    <location>
        <begin position="370"/>
        <end position="387"/>
    </location>
</feature>
<feature type="topological domain" description="Cytoplasmic" evidence="2">
    <location>
        <begin position="388"/>
        <end position="408"/>
    </location>
</feature>
<feature type="transmembrane region" description="Helical" evidence="1">
    <location>
        <begin position="409"/>
        <end position="426"/>
    </location>
</feature>
<feature type="topological domain" description="Extracellular" evidence="2">
    <location>
        <begin position="427"/>
        <end position="481"/>
    </location>
</feature>
<feature type="transmembrane region" description="Helical" evidence="1">
    <location>
        <begin position="482"/>
        <end position="499"/>
    </location>
</feature>
<feature type="topological domain" description="Cytoplasmic" evidence="2">
    <location>
        <begin position="500"/>
        <end position="514"/>
    </location>
</feature>
<name>QACA_STAAU</name>
<accession>P0A0J9</accession>
<accession>P23215</accession>
<keyword id="KW-0002">3D-structure</keyword>
<keyword id="KW-0046">Antibiotic resistance</keyword>
<keyword id="KW-1003">Cell membrane</keyword>
<keyword id="KW-0472">Membrane</keyword>
<keyword id="KW-0614">Plasmid</keyword>
<keyword id="KW-0812">Transmembrane</keyword>
<keyword id="KW-1133">Transmembrane helix</keyword>
<keyword id="KW-0813">Transport</keyword>
<organism>
    <name type="scientific">Staphylococcus aureus</name>
    <dbReference type="NCBI Taxonomy" id="1280"/>
    <lineage>
        <taxon>Bacteria</taxon>
        <taxon>Bacillati</taxon>
        <taxon>Bacillota</taxon>
        <taxon>Bacilli</taxon>
        <taxon>Bacillales</taxon>
        <taxon>Staphylococcaceae</taxon>
        <taxon>Staphylococcus</taxon>
    </lineage>
</organism>